<protein>
    <recommendedName>
        <fullName evidence="1">GTP cyclohydrolase FolE2</fullName>
        <ecNumber evidence="1">3.5.4.16</ecNumber>
    </recommendedName>
</protein>
<gene>
    <name evidence="1" type="primary">folE2</name>
    <name type="ordered locus">Daci_3650</name>
</gene>
<proteinExistence type="inferred from homology"/>
<comment type="function">
    <text evidence="1">Converts GTP to 7,8-dihydroneopterin triphosphate.</text>
</comment>
<comment type="catalytic activity">
    <reaction evidence="1">
        <text>GTP + H2O = 7,8-dihydroneopterin 3'-triphosphate + formate + H(+)</text>
        <dbReference type="Rhea" id="RHEA:17473"/>
        <dbReference type="ChEBI" id="CHEBI:15377"/>
        <dbReference type="ChEBI" id="CHEBI:15378"/>
        <dbReference type="ChEBI" id="CHEBI:15740"/>
        <dbReference type="ChEBI" id="CHEBI:37565"/>
        <dbReference type="ChEBI" id="CHEBI:58462"/>
        <dbReference type="EC" id="3.5.4.16"/>
    </reaction>
</comment>
<comment type="pathway">
    <text evidence="1">Cofactor biosynthesis; 7,8-dihydroneopterin triphosphate biosynthesis; 7,8-dihydroneopterin triphosphate from GTP: step 1/1.</text>
</comment>
<comment type="similarity">
    <text evidence="1">Belongs to the GTP cyclohydrolase IV family.</text>
</comment>
<sequence length="296" mass="32306">MLAPLPDVSLTDPAPSLSPLQWVGMQGIDLPVTVAEPGYWRELHARADVQVDLPAAHVKGIHMSRLYRQLDSLAEESALSALALRHALQAMIDSHLDCQSRSARMRLSLDLLAQRPALVTHDLSGWKSYPVRLDATLAQGVFQLRLQVGVGYSSTCPCSAALSRQLLEQGFLQAFAGEPLVEPDQVASWLRRHGTLATAHSQRSEAQVSVDLACDAPDLGILPLIARVEQALGTPVQTAVKRADEQAFAALNGRNLMFVEDAARRIQAALEGIYARPRVHVRHMESLHPHDAVAWA</sequence>
<keyword id="KW-0378">Hydrolase</keyword>
<keyword id="KW-1185">Reference proteome</keyword>
<reference key="1">
    <citation type="submission" date="2007-11" db="EMBL/GenBank/DDBJ databases">
        <title>Complete sequence of Delftia acidovorans DSM 14801 / SPH-1.</title>
        <authorList>
            <person name="Copeland A."/>
            <person name="Lucas S."/>
            <person name="Lapidus A."/>
            <person name="Barry K."/>
            <person name="Glavina del Rio T."/>
            <person name="Dalin E."/>
            <person name="Tice H."/>
            <person name="Pitluck S."/>
            <person name="Lowry S."/>
            <person name="Clum A."/>
            <person name="Schmutz J."/>
            <person name="Larimer F."/>
            <person name="Land M."/>
            <person name="Hauser L."/>
            <person name="Kyrpides N."/>
            <person name="Kim E."/>
            <person name="Schleheck D."/>
            <person name="Richardson P."/>
        </authorList>
    </citation>
    <scope>NUCLEOTIDE SEQUENCE [LARGE SCALE GENOMIC DNA]</scope>
    <source>
        <strain>DSM 14801 / SPH-1</strain>
    </source>
</reference>
<organism>
    <name type="scientific">Delftia acidovorans (strain DSM 14801 / SPH-1)</name>
    <dbReference type="NCBI Taxonomy" id="398578"/>
    <lineage>
        <taxon>Bacteria</taxon>
        <taxon>Pseudomonadati</taxon>
        <taxon>Pseudomonadota</taxon>
        <taxon>Betaproteobacteria</taxon>
        <taxon>Burkholderiales</taxon>
        <taxon>Comamonadaceae</taxon>
        <taxon>Delftia</taxon>
    </lineage>
</organism>
<evidence type="ECO:0000255" key="1">
    <source>
        <dbReference type="HAMAP-Rule" id="MF_01527"/>
    </source>
</evidence>
<feature type="chain" id="PRO_0000372026" description="GTP cyclohydrolase FolE2">
    <location>
        <begin position="1"/>
        <end position="296"/>
    </location>
</feature>
<feature type="site" description="May be catalytically important" evidence="1">
    <location>
        <position position="156"/>
    </location>
</feature>
<dbReference type="EC" id="3.5.4.16" evidence="1"/>
<dbReference type="EMBL" id="CP000884">
    <property type="protein sequence ID" value="ABX36282.1"/>
    <property type="molecule type" value="Genomic_DNA"/>
</dbReference>
<dbReference type="RefSeq" id="WP_012205478.1">
    <property type="nucleotide sequence ID" value="NC_010002.1"/>
</dbReference>
<dbReference type="SMR" id="A9C020"/>
<dbReference type="STRING" id="398578.Daci_3650"/>
<dbReference type="GeneID" id="24119026"/>
<dbReference type="KEGG" id="dac:Daci_3650"/>
<dbReference type="eggNOG" id="COG1469">
    <property type="taxonomic scope" value="Bacteria"/>
</dbReference>
<dbReference type="HOGENOM" id="CLU_062816_0_0_4"/>
<dbReference type="UniPathway" id="UPA00848">
    <property type="reaction ID" value="UER00151"/>
</dbReference>
<dbReference type="Proteomes" id="UP000000784">
    <property type="component" value="Chromosome"/>
</dbReference>
<dbReference type="GO" id="GO:0003934">
    <property type="term" value="F:GTP cyclohydrolase I activity"/>
    <property type="evidence" value="ECO:0007669"/>
    <property type="project" value="UniProtKB-UniRule"/>
</dbReference>
<dbReference type="GO" id="GO:0046654">
    <property type="term" value="P:tetrahydrofolate biosynthetic process"/>
    <property type="evidence" value="ECO:0007669"/>
    <property type="project" value="UniProtKB-UniRule"/>
</dbReference>
<dbReference type="Gene3D" id="3.10.270.10">
    <property type="entry name" value="Urate Oxidase"/>
    <property type="match status" value="1"/>
</dbReference>
<dbReference type="HAMAP" id="MF_01527_B">
    <property type="entry name" value="GTP_cyclohydrol_B"/>
    <property type="match status" value="1"/>
</dbReference>
<dbReference type="InterPro" id="IPR022838">
    <property type="entry name" value="GTP_cyclohydrolase_FolE2"/>
</dbReference>
<dbReference type="InterPro" id="IPR003801">
    <property type="entry name" value="GTP_cyclohydrolase_FolE2/MptA"/>
</dbReference>
<dbReference type="NCBIfam" id="NF010200">
    <property type="entry name" value="PRK13674.1-1"/>
    <property type="match status" value="1"/>
</dbReference>
<dbReference type="PANTHER" id="PTHR36445">
    <property type="entry name" value="GTP CYCLOHYDROLASE MPTA"/>
    <property type="match status" value="1"/>
</dbReference>
<dbReference type="PANTHER" id="PTHR36445:SF1">
    <property type="entry name" value="GTP CYCLOHYDROLASE MPTA"/>
    <property type="match status" value="1"/>
</dbReference>
<dbReference type="Pfam" id="PF02649">
    <property type="entry name" value="GCHY-1"/>
    <property type="match status" value="1"/>
</dbReference>
<name>GCH4_DELAS</name>
<accession>A9C020</accession>